<feature type="chain" id="PRO_0000420081" description="P3N-PIPO polyprotein">
    <location>
        <begin position="1"/>
        <end position="993"/>
    </location>
</feature>
<feature type="chain" id="PRO_0000420082" description="P1 protease" evidence="4">
    <location>
        <begin position="1"/>
        <end position="298"/>
    </location>
</feature>
<feature type="chain" id="PRO_0000420083" description="Helper component proteinase" evidence="4">
    <location>
        <begin position="299"/>
        <end position="755"/>
    </location>
</feature>
<feature type="chain" id="PRO_0000408549" description="Movement protein P3N-PIPO">
    <location>
        <begin position="756"/>
        <end position="993"/>
    </location>
</feature>
<feature type="domain" description="Peptidase S30" evidence="6">
    <location>
        <begin position="154"/>
        <end position="298"/>
    </location>
</feature>
<feature type="domain" description="Peptidase C6" evidence="5">
    <location>
        <begin position="633"/>
        <end position="755"/>
    </location>
</feature>
<feature type="short sequence motif" description="Involved in interaction with stylet and aphid transmission" evidence="1">
    <location>
        <begin position="349"/>
        <end position="352"/>
    </location>
</feature>
<feature type="short sequence motif" description="Involved in virions binding and aphid transmission" evidence="1">
    <location>
        <begin position="607"/>
        <end position="609"/>
    </location>
</feature>
<feature type="active site" description="For P1 proteinase activity" evidence="6">
    <location>
        <position position="207"/>
    </location>
</feature>
<feature type="active site" description="For P1 proteinase activity" evidence="6">
    <location>
        <position position="216"/>
    </location>
</feature>
<feature type="active site" description="For P1 proteinase activity" evidence="6">
    <location>
        <position position="249"/>
    </location>
</feature>
<feature type="active site" description="For helper component proteinase activity" evidence="5">
    <location>
        <position position="641"/>
    </location>
</feature>
<feature type="active site" description="For helper component proteinase activity" evidence="5">
    <location>
        <position position="714"/>
    </location>
</feature>
<feature type="site" description="Cleavage; by P1 proteinase" evidence="6">
    <location>
        <begin position="298"/>
        <end position="299"/>
    </location>
</feature>
<feature type="site" description="Cleavage; by autolysis" evidence="5">
    <location>
        <begin position="755"/>
        <end position="756"/>
    </location>
</feature>
<feature type="unsure residue">
    <location>
        <begin position="909"/>
        <end position="915"/>
    </location>
</feature>
<comment type="function">
    <molecule>Helper component proteinase</molecule>
    <text evidence="2">Required for aphid transmission and also has proteolytic activity. Only cleaves a Gly-Gly dipeptide at its own C-terminus. Interacts with virions and aphid stylets. Acts as a suppressor of RNA-mediated gene silencing, also known as post-transcriptional gene silencing (PTGS), a mechanism of plant viral defense that limits the accumulation of viral RNAs. May have RNA-binding activity.</text>
</comment>
<comment type="function">
    <molecule>Movement protein P3N-PIPO</molecule>
    <text evidence="3">Allows efficient cell to cell propagation, by bypassing the host cell wall barrier. Transports viral genome to neighboring plant cells directly through plasmosdesmata, without any budding.</text>
</comment>
<comment type="catalytic activity">
    <molecule>Helper component proteinase</molecule>
    <reaction>
        <text>Hydrolyzes a Gly-|-Gly bond at its own C-terminus, commonly in the sequence -Tyr-Xaa-Val-Gly-|-Gly, in the processing of the potyviral polyprotein.</text>
        <dbReference type="EC" id="3.4.22.45"/>
    </reaction>
</comment>
<comment type="subunit">
    <molecule>Movement protein P3N-PIPO</molecule>
    <text evidence="3">Interacts (via PIPO domain) with host PCaP1 protein; this interaction may help to anchor the movement complex to the plasma membrane from which the complex could move to the plasmodesmata.</text>
</comment>
<comment type="subcellular location">
    <molecule>Movement protein P3N-PIPO</molecule>
    <subcellularLocation>
        <location evidence="3">Host cell junction</location>
        <location evidence="3">Host plasmodesma</location>
    </subcellularLocation>
</comment>
<comment type="alternative products">
    <event type="ribosomal frameshifting"/>
    <isoform>
        <id>P0CK05-1</id>
        <name>P3N-PIPO polyprotein</name>
        <sequence type="displayed"/>
    </isoform>
    <isoform>
        <id>Q85197-1</id>
        <name>Genome polyprotein</name>
        <sequence type="external"/>
    </isoform>
</comment>
<comment type="domain">
    <text evidence="1">The N-terminus of helper component proteinase is involved in interaction with stylets. The central part is involved in interaction with virions and the C-terminus is involved in cell-to cell movement of the virus (By similarity).</text>
</comment>
<comment type="PTM">
    <text evidence="1">Potyviral RNA is expressed as two polyproteins which undergo post-translational proteolytic processing. Genome polyprotein is processed by NIa-pro, P1 and HC-pro proteinases resulting in the production of at least ten individual proteins. P3N-PIPO is cleaved by P1 and HC-pro proteinases resulting in the production of three individual proteins. The P1 proteinase and the HC-pro cleave only their respective C-termini autocatalytically (By similarity).</text>
</comment>
<comment type="miscellaneous">
    <molecule>Isoform P3N-PIPO polyprotein</molecule>
    <text>Produced by -1 ribosomal frameshifting in P3 ORF.</text>
</comment>
<comment type="similarity">
    <text evidence="7">Belongs to the potyviridae P3N-PIPO polyprotein family.</text>
</comment>
<reference key="1">
    <citation type="journal article" date="1994" name="J. Gen. Virol.">
        <title>The nucleotide sequence of potato virus A genomic RNA and its sequence similarities with otherpotyviruses.</title>
        <authorList>
            <person name="Puurand U."/>
            <person name="Makinen K."/>
            <person name="Paulin L."/>
            <person name="Saarma M."/>
        </authorList>
    </citation>
    <scope>NUCLEOTIDE SEQUENCE [GENOMIC RNA]</scope>
</reference>
<evidence type="ECO:0000250" key="1"/>
<evidence type="ECO:0000250" key="2">
    <source>
        <dbReference type="UniProtKB" id="P04517"/>
    </source>
</evidence>
<evidence type="ECO:0000250" key="3">
    <source>
        <dbReference type="UniProtKB" id="P0CK11"/>
    </source>
</evidence>
<evidence type="ECO:0000255" key="4"/>
<evidence type="ECO:0000255" key="5">
    <source>
        <dbReference type="PROSITE-ProRule" id="PRU01080"/>
    </source>
</evidence>
<evidence type="ECO:0000255" key="6">
    <source>
        <dbReference type="PROSITE-ProRule" id="PRU01219"/>
    </source>
</evidence>
<evidence type="ECO:0000305" key="7"/>
<proteinExistence type="inferred from homology"/>
<name>MVP_PVMA</name>
<accession>P0CK05</accession>
<sequence>MATQVIMVGEFKILEVNCKPHAPVAAIHVPTQTPKTNDIKWADLEFTLAKSLQRQAHGVVKVDKHGTARIKRASKHHMSCLEQQMADEVAEKEAFMAAPTQLVTSIIFAGTTPPSMMETETIVKKIHTVGKRAKVMRKRSYITPPTDKSLRNHGVTPYSVQQLCRTLGNLSKRTGISLEVVGKTSKATKLRFTKTSFGHMARVQLKHHDGRMHRRDLVVDTSTTTIMQTLFLKTARTNANLDVLTHGSSGLVFWNYLVTGQRMRTRDNFIIVRGRCNGILVDARAKLSESTMLSTHHYSTGDVFWRGFNRTFLENKPINLDHVCSSDFSVEECGSIAALICQSLLPCGKITCRACAAKNLNMDEDTFKEFQTQRAREISAVIISEHPNFACVSQFIDRYFSHQRVLNPNVNAYREILKIVGGFTQSPYTHIQELNEILVLGGRATPEQLGSASAHLLEITRFVRNRTDNIKKGSLALFRNKISAKAHVNTALMCDNQLDRNGNLIWGERGYHAKRFFSNYFDIITPGGGYKQYIERRVPNGIRKLAIGNLIVTTNLEALREQLEGESIEKKAVTKACVSMSDNNYKYPCCCVTLDDGTPLYSTFIMPTKNHLVIGNSGDPKFLDLPADISTQMYIAKSGYCYINIFLAMLVNVDESDAKDFTKKVRDIIVPDLGEWPTLIDVATSCSLLSAFYPATSAAELPRILVDHDLKTMHVIDSYGSLNTGYHVLKANTIRQLIQFASNSLDSEMKHYRVGGTSNSQINGYATIKMLAKAVYRPKLMKEIIHEQPFMLVMSLMSPGILIALANSGALEMGIHHWIREGDSLVKMAHMLRTVAQNVSVARATWVQQEIISDSAQQMLETILNGTIPNVSYFQAIQYLTMLAASKEVDAEVRVTGYYTFKLQTSELLEKNLLEPVGGFMARVKLFWKISSNKTFAKVLHCGYNCCQARKARRLRRNLRYILSVCTGQTDGILQESSLSGCEWIASPIQQHH</sequence>
<dbReference type="EC" id="3.4.21.-"/>
<dbReference type="EC" id="3.4.22.45"/>
<dbReference type="EMBL" id="Z21670">
    <property type="status" value="NOT_ANNOTATED_CDS"/>
    <property type="molecule type" value="Genomic_RNA"/>
</dbReference>
<dbReference type="SMR" id="P0CK05"/>
<dbReference type="Proteomes" id="UP000008484">
    <property type="component" value="Genome"/>
</dbReference>
<dbReference type="GO" id="GO:0044219">
    <property type="term" value="C:host cell plasmodesma"/>
    <property type="evidence" value="ECO:0007669"/>
    <property type="project" value="UniProtKB-SubCell"/>
</dbReference>
<dbReference type="GO" id="GO:0004197">
    <property type="term" value="F:cysteine-type endopeptidase activity"/>
    <property type="evidence" value="ECO:0007669"/>
    <property type="project" value="InterPro"/>
</dbReference>
<dbReference type="GO" id="GO:0008236">
    <property type="term" value="F:serine-type peptidase activity"/>
    <property type="evidence" value="ECO:0007669"/>
    <property type="project" value="UniProtKB-KW"/>
</dbReference>
<dbReference type="GO" id="GO:0006508">
    <property type="term" value="P:proteolysis"/>
    <property type="evidence" value="ECO:0007669"/>
    <property type="project" value="UniProtKB-KW"/>
</dbReference>
<dbReference type="GO" id="GO:0052170">
    <property type="term" value="P:symbiont-mediated suppression of host innate immune response"/>
    <property type="evidence" value="ECO:0007669"/>
    <property type="project" value="UniProtKB-KW"/>
</dbReference>
<dbReference type="GO" id="GO:0046740">
    <property type="term" value="P:transport of virus in host, cell to cell"/>
    <property type="evidence" value="ECO:0007669"/>
    <property type="project" value="UniProtKB-KW"/>
</dbReference>
<dbReference type="GO" id="GO:0075523">
    <property type="term" value="P:viral translational frameshifting"/>
    <property type="evidence" value="ECO:0007669"/>
    <property type="project" value="UniProtKB-KW"/>
</dbReference>
<dbReference type="Gene3D" id="3.90.70.150">
    <property type="entry name" value="Helper component proteinase"/>
    <property type="match status" value="1"/>
</dbReference>
<dbReference type="InterPro" id="IPR001456">
    <property type="entry name" value="HC-pro"/>
</dbReference>
<dbReference type="InterPro" id="IPR031159">
    <property type="entry name" value="HC_PRO_CPD_dom"/>
</dbReference>
<dbReference type="InterPro" id="IPR042308">
    <property type="entry name" value="HC_PRO_CPD_sf"/>
</dbReference>
<dbReference type="InterPro" id="IPR002540">
    <property type="entry name" value="Pept_S30_P1_potyvir"/>
</dbReference>
<dbReference type="InterPro" id="IPR039560">
    <property type="entry name" value="Potyvirid-P3"/>
</dbReference>
<dbReference type="Pfam" id="PF00851">
    <property type="entry name" value="Peptidase_C6"/>
    <property type="match status" value="1"/>
</dbReference>
<dbReference type="Pfam" id="PF01577">
    <property type="entry name" value="Peptidase_S30"/>
    <property type="match status" value="1"/>
</dbReference>
<dbReference type="Pfam" id="PF13608">
    <property type="entry name" value="Potyvirid-P3"/>
    <property type="match status" value="1"/>
</dbReference>
<dbReference type="PROSITE" id="PS51744">
    <property type="entry name" value="HC_PRO_CPD"/>
    <property type="match status" value="1"/>
</dbReference>
<dbReference type="PROSITE" id="PS51871">
    <property type="entry name" value="PV_P1_PRO"/>
    <property type="match status" value="1"/>
</dbReference>
<organismHost>
    <name type="scientific">Solanum betaceum</name>
    <name type="common">Tamarillo</name>
    <name type="synonym">Cyphomandra betacea</name>
    <dbReference type="NCBI Taxonomy" id="45843"/>
</organismHost>
<organismHost>
    <name type="scientific">Solanum nigrum</name>
    <name type="common">Black nightshade</name>
    <dbReference type="NCBI Taxonomy" id="4112"/>
</organismHost>
<organismHost>
    <name type="scientific">Solanum tuberosum</name>
    <name type="common">Potato</name>
    <dbReference type="NCBI Taxonomy" id="4113"/>
</organismHost>
<protein>
    <recommendedName>
        <fullName>P3N-PIPO polyprotein</fullName>
    </recommendedName>
    <component>
        <recommendedName>
            <fullName>P1 protease</fullName>
            <ecNumber>3.4.21.-</ecNumber>
        </recommendedName>
        <alternativeName>
            <fullName>N-terminal protein</fullName>
        </alternativeName>
        <alternativeName>
            <fullName>P1 proteinase</fullName>
        </alternativeName>
    </component>
    <component>
        <recommendedName>
            <fullName>Helper component proteinase</fullName>
            <shortName>HC-pro</shortName>
            <ecNumber>3.4.22.45</ecNumber>
        </recommendedName>
    </component>
    <component>
        <recommendedName>
            <fullName>Movement protein P3N-PIPO</fullName>
        </recommendedName>
        <alternativeName>
            <fullName>Pretty interesting potyviridae ORF</fullName>
            <shortName>PIPO</shortName>
        </alternativeName>
    </component>
</protein>
<organism>
    <name type="scientific">Potato virus A</name>
    <name type="common">PVA</name>
    <dbReference type="NCBI Taxonomy" id="12215"/>
    <lineage>
        <taxon>Viruses</taxon>
        <taxon>Riboviria</taxon>
        <taxon>Orthornavirae</taxon>
        <taxon>Pisuviricota</taxon>
        <taxon>Stelpaviricetes</taxon>
        <taxon>Patatavirales</taxon>
        <taxon>Potyviridae</taxon>
        <taxon>Potyvirus</taxon>
    </lineage>
</organism>
<keyword id="KW-1031">Host cell junction</keyword>
<keyword id="KW-0945">Host-virus interaction</keyword>
<keyword id="KW-0378">Hydrolase</keyword>
<keyword id="KW-1090">Inhibition of host innate immune response by virus</keyword>
<keyword id="KW-0645">Protease</keyword>
<keyword id="KW-0688">Ribosomal frameshifting</keyword>
<keyword id="KW-0720">Serine protease</keyword>
<keyword id="KW-0941">Suppressor of RNA silencing</keyword>
<keyword id="KW-0813">Transport</keyword>
<keyword id="KW-0899">Viral immunoevasion</keyword>
<keyword id="KW-0916">Viral movement protein</keyword>